<accession>Q9JTM3</accession>
<accession>A1IST0</accession>
<sequence>MKRKNIALIPAAGIGARFGADKPKQYVEIGSKTVLEHTIGIFERHEAVDLTVVVVSPEDTFADKVQTAFPQVRVWKNGGQTRAETVRNGVAKLLETGLAAETDNILVHDAARCCLPSEALTRLIEQAGNAAEGGILAIPVADTLKCADGGNISATVERTSLWQAQTPQLFRAGLLHRALAAENLDGITDEASAVEKLGIRPLLVQGDARNLKLTQPQDAYIVRLLLDAV</sequence>
<evidence type="ECO:0000255" key="1">
    <source>
        <dbReference type="HAMAP-Rule" id="MF_00108"/>
    </source>
</evidence>
<reference key="1">
    <citation type="journal article" date="2000" name="Nature">
        <title>Complete DNA sequence of a serogroup A strain of Neisseria meningitidis Z2491.</title>
        <authorList>
            <person name="Parkhill J."/>
            <person name="Achtman M."/>
            <person name="James K.D."/>
            <person name="Bentley S.D."/>
            <person name="Churcher C.M."/>
            <person name="Klee S.R."/>
            <person name="Morelli G."/>
            <person name="Basham D."/>
            <person name="Brown D."/>
            <person name="Chillingworth T."/>
            <person name="Davies R.M."/>
            <person name="Davis P."/>
            <person name="Devlin K."/>
            <person name="Feltwell T."/>
            <person name="Hamlin N."/>
            <person name="Holroyd S."/>
            <person name="Jagels K."/>
            <person name="Leather S."/>
            <person name="Moule S."/>
            <person name="Mungall K.L."/>
            <person name="Quail M.A."/>
            <person name="Rajandream M.A."/>
            <person name="Rutherford K.M."/>
            <person name="Simmonds M."/>
            <person name="Skelton J."/>
            <person name="Whitehead S."/>
            <person name="Spratt B.G."/>
            <person name="Barrell B.G."/>
        </authorList>
    </citation>
    <scope>NUCLEOTIDE SEQUENCE [LARGE SCALE GENOMIC DNA]</scope>
    <source>
        <strain>DSM 15465 / Z2491</strain>
    </source>
</reference>
<keyword id="KW-0414">Isoprene biosynthesis</keyword>
<keyword id="KW-0548">Nucleotidyltransferase</keyword>
<keyword id="KW-0808">Transferase</keyword>
<organism>
    <name type="scientific">Neisseria meningitidis serogroup A / serotype 4A (strain DSM 15465 / Z2491)</name>
    <dbReference type="NCBI Taxonomy" id="122587"/>
    <lineage>
        <taxon>Bacteria</taxon>
        <taxon>Pseudomonadati</taxon>
        <taxon>Pseudomonadota</taxon>
        <taxon>Betaproteobacteria</taxon>
        <taxon>Neisseriales</taxon>
        <taxon>Neisseriaceae</taxon>
        <taxon>Neisseria</taxon>
    </lineage>
</organism>
<name>ISPD_NEIMA</name>
<protein>
    <recommendedName>
        <fullName evidence="1">2-C-methyl-D-erythritol 4-phosphate cytidylyltransferase</fullName>
        <ecNumber evidence="1">2.7.7.60</ecNumber>
    </recommendedName>
    <alternativeName>
        <fullName evidence="1">4-diphosphocytidyl-2C-methyl-D-erythritol synthase</fullName>
    </alternativeName>
    <alternativeName>
        <fullName evidence="1">MEP cytidylyltransferase</fullName>
        <shortName evidence="1">MCT</shortName>
    </alternativeName>
</protein>
<dbReference type="EC" id="2.7.7.60" evidence="1"/>
<dbReference type="EMBL" id="AL157959">
    <property type="protein sequence ID" value="CAM08842.1"/>
    <property type="molecule type" value="Genomic_DNA"/>
</dbReference>
<dbReference type="PIR" id="D81867">
    <property type="entry name" value="D81867"/>
</dbReference>
<dbReference type="RefSeq" id="WP_002246293.1">
    <property type="nucleotide sequence ID" value="NC_003116.1"/>
</dbReference>
<dbReference type="SMR" id="Q9JTM3"/>
<dbReference type="EnsemblBacteria" id="CAM08842">
    <property type="protein sequence ID" value="CAM08842"/>
    <property type="gene ID" value="NMA1713"/>
</dbReference>
<dbReference type="GeneID" id="93387866"/>
<dbReference type="KEGG" id="nma:NMA1713"/>
<dbReference type="HOGENOM" id="CLU_061281_3_0_4"/>
<dbReference type="UniPathway" id="UPA00056">
    <property type="reaction ID" value="UER00093"/>
</dbReference>
<dbReference type="Proteomes" id="UP000000626">
    <property type="component" value="Chromosome"/>
</dbReference>
<dbReference type="GO" id="GO:0050518">
    <property type="term" value="F:2-C-methyl-D-erythritol 4-phosphate cytidylyltransferase activity"/>
    <property type="evidence" value="ECO:0007669"/>
    <property type="project" value="UniProtKB-UniRule"/>
</dbReference>
<dbReference type="GO" id="GO:0019288">
    <property type="term" value="P:isopentenyl diphosphate biosynthetic process, methylerythritol 4-phosphate pathway"/>
    <property type="evidence" value="ECO:0007669"/>
    <property type="project" value="UniProtKB-UniRule"/>
</dbReference>
<dbReference type="CDD" id="cd02516">
    <property type="entry name" value="CDP-ME_synthetase"/>
    <property type="match status" value="1"/>
</dbReference>
<dbReference type="FunFam" id="3.90.550.10:FF:000003">
    <property type="entry name" value="2-C-methyl-D-erythritol 4-phosphate cytidylyltransferase"/>
    <property type="match status" value="1"/>
</dbReference>
<dbReference type="Gene3D" id="3.90.550.10">
    <property type="entry name" value="Spore Coat Polysaccharide Biosynthesis Protein SpsA, Chain A"/>
    <property type="match status" value="1"/>
</dbReference>
<dbReference type="HAMAP" id="MF_00108">
    <property type="entry name" value="IspD"/>
    <property type="match status" value="1"/>
</dbReference>
<dbReference type="InterPro" id="IPR001228">
    <property type="entry name" value="IspD"/>
</dbReference>
<dbReference type="InterPro" id="IPR034683">
    <property type="entry name" value="IspD/TarI"/>
</dbReference>
<dbReference type="InterPro" id="IPR050088">
    <property type="entry name" value="IspD/TarI_cytidylyltransf_bact"/>
</dbReference>
<dbReference type="InterPro" id="IPR018294">
    <property type="entry name" value="ISPD_synthase_CS"/>
</dbReference>
<dbReference type="InterPro" id="IPR029044">
    <property type="entry name" value="Nucleotide-diphossugar_trans"/>
</dbReference>
<dbReference type="NCBIfam" id="TIGR00453">
    <property type="entry name" value="ispD"/>
    <property type="match status" value="1"/>
</dbReference>
<dbReference type="PANTHER" id="PTHR32125">
    <property type="entry name" value="2-C-METHYL-D-ERYTHRITOL 4-PHOSPHATE CYTIDYLYLTRANSFERASE, CHLOROPLASTIC"/>
    <property type="match status" value="1"/>
</dbReference>
<dbReference type="PANTHER" id="PTHR32125:SF4">
    <property type="entry name" value="2-C-METHYL-D-ERYTHRITOL 4-PHOSPHATE CYTIDYLYLTRANSFERASE, CHLOROPLASTIC"/>
    <property type="match status" value="1"/>
</dbReference>
<dbReference type="Pfam" id="PF01128">
    <property type="entry name" value="IspD"/>
    <property type="match status" value="1"/>
</dbReference>
<dbReference type="SUPFAM" id="SSF53448">
    <property type="entry name" value="Nucleotide-diphospho-sugar transferases"/>
    <property type="match status" value="1"/>
</dbReference>
<dbReference type="PROSITE" id="PS01295">
    <property type="entry name" value="ISPD"/>
    <property type="match status" value="1"/>
</dbReference>
<gene>
    <name evidence="1" type="primary">ispD</name>
    <name type="ordered locus">NMA1713</name>
</gene>
<feature type="chain" id="PRO_0000075593" description="2-C-methyl-D-erythritol 4-phosphate cytidylyltransferase">
    <location>
        <begin position="1"/>
        <end position="229"/>
    </location>
</feature>
<feature type="site" description="Transition state stabilizer" evidence="1">
    <location>
        <position position="17"/>
    </location>
</feature>
<feature type="site" description="Transition state stabilizer" evidence="1">
    <location>
        <position position="24"/>
    </location>
</feature>
<feature type="site" description="Positions MEP for the nucleophilic attack" evidence="1">
    <location>
        <position position="158"/>
    </location>
</feature>
<feature type="site" description="Positions MEP for the nucleophilic attack" evidence="1">
    <location>
        <position position="212"/>
    </location>
</feature>
<proteinExistence type="inferred from homology"/>
<comment type="function">
    <text evidence="1">Catalyzes the formation of 4-diphosphocytidyl-2-C-methyl-D-erythritol from CTP and 2-C-methyl-D-erythritol 4-phosphate (MEP).</text>
</comment>
<comment type="catalytic activity">
    <reaction evidence="1">
        <text>2-C-methyl-D-erythritol 4-phosphate + CTP + H(+) = 4-CDP-2-C-methyl-D-erythritol + diphosphate</text>
        <dbReference type="Rhea" id="RHEA:13429"/>
        <dbReference type="ChEBI" id="CHEBI:15378"/>
        <dbReference type="ChEBI" id="CHEBI:33019"/>
        <dbReference type="ChEBI" id="CHEBI:37563"/>
        <dbReference type="ChEBI" id="CHEBI:57823"/>
        <dbReference type="ChEBI" id="CHEBI:58262"/>
        <dbReference type="EC" id="2.7.7.60"/>
    </reaction>
</comment>
<comment type="pathway">
    <text evidence="1">Isoprenoid biosynthesis; isopentenyl diphosphate biosynthesis via DXP pathway; isopentenyl diphosphate from 1-deoxy-D-xylulose 5-phosphate: step 2/6.</text>
</comment>
<comment type="similarity">
    <text evidence="1">Belongs to the IspD/TarI cytidylyltransferase family. IspD subfamily.</text>
</comment>